<keyword id="KW-0963">Cytoplasm</keyword>
<keyword id="KW-0560">Oxidoreductase</keyword>
<keyword id="KW-1185">Reference proteome</keyword>
<dbReference type="EC" id="1.8.4.8" evidence="1"/>
<dbReference type="EMBL" id="CU928161">
    <property type="protein sequence ID" value="CAR04270.1"/>
    <property type="molecule type" value="Genomic_DNA"/>
</dbReference>
<dbReference type="RefSeq" id="WP_000039865.1">
    <property type="nucleotide sequence ID" value="NC_011742.1"/>
</dbReference>
<dbReference type="SMR" id="B7MKM9"/>
<dbReference type="KEGG" id="ecz:ECS88_3026"/>
<dbReference type="HOGENOM" id="CLU_044089_3_0_6"/>
<dbReference type="UniPathway" id="UPA00140">
    <property type="reaction ID" value="UER00206"/>
</dbReference>
<dbReference type="Proteomes" id="UP000000747">
    <property type="component" value="Chromosome"/>
</dbReference>
<dbReference type="GO" id="GO:0005737">
    <property type="term" value="C:cytoplasm"/>
    <property type="evidence" value="ECO:0007669"/>
    <property type="project" value="UniProtKB-SubCell"/>
</dbReference>
<dbReference type="GO" id="GO:0004604">
    <property type="term" value="F:phosphoadenylyl-sulfate reductase (thioredoxin) activity"/>
    <property type="evidence" value="ECO:0007669"/>
    <property type="project" value="UniProtKB-UniRule"/>
</dbReference>
<dbReference type="GO" id="GO:0070814">
    <property type="term" value="P:hydrogen sulfide biosynthetic process"/>
    <property type="evidence" value="ECO:0007669"/>
    <property type="project" value="UniProtKB-UniRule"/>
</dbReference>
<dbReference type="GO" id="GO:0019379">
    <property type="term" value="P:sulfate assimilation, phosphoadenylyl sulfate reduction by phosphoadenylyl-sulfate reductase (thioredoxin)"/>
    <property type="evidence" value="ECO:0007669"/>
    <property type="project" value="UniProtKB-UniRule"/>
</dbReference>
<dbReference type="CDD" id="cd23945">
    <property type="entry name" value="PAPS_reductase"/>
    <property type="match status" value="1"/>
</dbReference>
<dbReference type="FunFam" id="3.40.50.620:FF:000043">
    <property type="entry name" value="Phosphoadenosine phosphosulfate reductase"/>
    <property type="match status" value="1"/>
</dbReference>
<dbReference type="Gene3D" id="3.40.50.620">
    <property type="entry name" value="HUPs"/>
    <property type="match status" value="1"/>
</dbReference>
<dbReference type="HAMAP" id="MF_00063">
    <property type="entry name" value="CysH"/>
    <property type="match status" value="1"/>
</dbReference>
<dbReference type="InterPro" id="IPR004511">
    <property type="entry name" value="PAPS/APS_Rdtase"/>
</dbReference>
<dbReference type="InterPro" id="IPR002500">
    <property type="entry name" value="PAPS_reduct_dom"/>
</dbReference>
<dbReference type="InterPro" id="IPR011800">
    <property type="entry name" value="PAPS_reductase_CysH"/>
</dbReference>
<dbReference type="InterPro" id="IPR014729">
    <property type="entry name" value="Rossmann-like_a/b/a_fold"/>
</dbReference>
<dbReference type="NCBIfam" id="TIGR00434">
    <property type="entry name" value="cysH"/>
    <property type="match status" value="1"/>
</dbReference>
<dbReference type="NCBIfam" id="TIGR02057">
    <property type="entry name" value="PAPS_reductase"/>
    <property type="match status" value="1"/>
</dbReference>
<dbReference type="NCBIfam" id="NF002537">
    <property type="entry name" value="PRK02090.1"/>
    <property type="match status" value="1"/>
</dbReference>
<dbReference type="PANTHER" id="PTHR46509">
    <property type="entry name" value="PHOSPHOADENOSINE PHOSPHOSULFATE REDUCTASE"/>
    <property type="match status" value="1"/>
</dbReference>
<dbReference type="PANTHER" id="PTHR46509:SF1">
    <property type="entry name" value="PHOSPHOADENOSINE PHOSPHOSULFATE REDUCTASE"/>
    <property type="match status" value="1"/>
</dbReference>
<dbReference type="Pfam" id="PF01507">
    <property type="entry name" value="PAPS_reduct"/>
    <property type="match status" value="1"/>
</dbReference>
<dbReference type="PIRSF" id="PIRSF000857">
    <property type="entry name" value="PAPS_reductase"/>
    <property type="match status" value="1"/>
</dbReference>
<dbReference type="SUPFAM" id="SSF52402">
    <property type="entry name" value="Adenine nucleotide alpha hydrolases-like"/>
    <property type="match status" value="1"/>
</dbReference>
<reference key="1">
    <citation type="journal article" date="2009" name="PLoS Genet.">
        <title>Organised genome dynamics in the Escherichia coli species results in highly diverse adaptive paths.</title>
        <authorList>
            <person name="Touchon M."/>
            <person name="Hoede C."/>
            <person name="Tenaillon O."/>
            <person name="Barbe V."/>
            <person name="Baeriswyl S."/>
            <person name="Bidet P."/>
            <person name="Bingen E."/>
            <person name="Bonacorsi S."/>
            <person name="Bouchier C."/>
            <person name="Bouvet O."/>
            <person name="Calteau A."/>
            <person name="Chiapello H."/>
            <person name="Clermont O."/>
            <person name="Cruveiller S."/>
            <person name="Danchin A."/>
            <person name="Diard M."/>
            <person name="Dossat C."/>
            <person name="Karoui M.E."/>
            <person name="Frapy E."/>
            <person name="Garry L."/>
            <person name="Ghigo J.M."/>
            <person name="Gilles A.M."/>
            <person name="Johnson J."/>
            <person name="Le Bouguenec C."/>
            <person name="Lescat M."/>
            <person name="Mangenot S."/>
            <person name="Martinez-Jehanne V."/>
            <person name="Matic I."/>
            <person name="Nassif X."/>
            <person name="Oztas S."/>
            <person name="Petit M.A."/>
            <person name="Pichon C."/>
            <person name="Rouy Z."/>
            <person name="Ruf C.S."/>
            <person name="Schneider D."/>
            <person name="Tourret J."/>
            <person name="Vacherie B."/>
            <person name="Vallenet D."/>
            <person name="Medigue C."/>
            <person name="Rocha E.P.C."/>
            <person name="Denamur E."/>
        </authorList>
    </citation>
    <scope>NUCLEOTIDE SEQUENCE [LARGE SCALE GENOMIC DNA]</scope>
    <source>
        <strain>S88 / ExPEC</strain>
    </source>
</reference>
<feature type="chain" id="PRO_1000116948" description="Phosphoadenosine 5'-phosphosulfate reductase">
    <location>
        <begin position="1"/>
        <end position="244"/>
    </location>
</feature>
<feature type="active site" description="Nucleophile; cysteine thiosulfonate intermediate" evidence="1">
    <location>
        <position position="239"/>
    </location>
</feature>
<sequence length="244" mass="28003">MSKLDLNALNELPKVDRILALAETNAQLEKLDAEGRVAWALDNLPGEYVLSSSFGIQAAVSLHLVNQIRPDIPVILTDTGYLFPETYRFIDELTDKLKLNLKVYRATESAAWQEARYGKLWEQGVEGIEKYNDINKVEPMNRALKELNVQTWFAGLRREQSGSRANLPVLAIQRGVFKVLPIIDWDNRTIYQYLQKHGLKYHPLWDEGYLSVGDTHTTRKWEPGMAEEETRFFGLKRECGLHEG</sequence>
<organism>
    <name type="scientific">Escherichia coli O45:K1 (strain S88 / ExPEC)</name>
    <dbReference type="NCBI Taxonomy" id="585035"/>
    <lineage>
        <taxon>Bacteria</taxon>
        <taxon>Pseudomonadati</taxon>
        <taxon>Pseudomonadota</taxon>
        <taxon>Gammaproteobacteria</taxon>
        <taxon>Enterobacterales</taxon>
        <taxon>Enterobacteriaceae</taxon>
        <taxon>Escherichia</taxon>
    </lineage>
</organism>
<gene>
    <name evidence="1" type="primary">cysH</name>
    <name type="ordered locus">ECS88_3026</name>
</gene>
<accession>B7MKM9</accession>
<comment type="function">
    <text evidence="1">Catalyzes the formation of sulfite from phosphoadenosine 5'-phosphosulfate (PAPS) using thioredoxin as an electron donor.</text>
</comment>
<comment type="catalytic activity">
    <reaction evidence="1">
        <text>[thioredoxin]-disulfide + sulfite + adenosine 3',5'-bisphosphate + 2 H(+) = [thioredoxin]-dithiol + 3'-phosphoadenylyl sulfate</text>
        <dbReference type="Rhea" id="RHEA:11724"/>
        <dbReference type="Rhea" id="RHEA-COMP:10698"/>
        <dbReference type="Rhea" id="RHEA-COMP:10700"/>
        <dbReference type="ChEBI" id="CHEBI:15378"/>
        <dbReference type="ChEBI" id="CHEBI:17359"/>
        <dbReference type="ChEBI" id="CHEBI:29950"/>
        <dbReference type="ChEBI" id="CHEBI:50058"/>
        <dbReference type="ChEBI" id="CHEBI:58339"/>
        <dbReference type="ChEBI" id="CHEBI:58343"/>
        <dbReference type="EC" id="1.8.4.8"/>
    </reaction>
</comment>
<comment type="pathway">
    <text evidence="1">Sulfur metabolism; hydrogen sulfide biosynthesis; sulfite from sulfate: step 3/3.</text>
</comment>
<comment type="subcellular location">
    <subcellularLocation>
        <location evidence="1">Cytoplasm</location>
    </subcellularLocation>
</comment>
<comment type="similarity">
    <text evidence="1">Belongs to the PAPS reductase family. CysH subfamily.</text>
</comment>
<evidence type="ECO:0000255" key="1">
    <source>
        <dbReference type="HAMAP-Rule" id="MF_00063"/>
    </source>
</evidence>
<name>CYSH_ECO45</name>
<protein>
    <recommendedName>
        <fullName evidence="1">Phosphoadenosine 5'-phosphosulfate reductase</fullName>
        <shortName evidence="1">PAPS reductase</shortName>
        <ecNumber evidence="1">1.8.4.8</ecNumber>
    </recommendedName>
    <alternativeName>
        <fullName evidence="1">3'-phosphoadenylylsulfate reductase</fullName>
    </alternativeName>
    <alternativeName>
        <fullName evidence="1">PAPS reductase, thioredoxin dependent</fullName>
    </alternativeName>
    <alternativeName>
        <fullName evidence="1">PAPS sulfotransferase</fullName>
    </alternativeName>
    <alternativeName>
        <fullName evidence="1">PAdoPS reductase</fullName>
    </alternativeName>
</protein>
<proteinExistence type="inferred from homology"/>